<evidence type="ECO:0000255" key="1">
    <source>
        <dbReference type="HAMAP-Rule" id="MF_01026"/>
    </source>
</evidence>
<keyword id="KW-0004">4Fe-4S</keyword>
<keyword id="KW-0028">Amino-acid biosynthesis</keyword>
<keyword id="KW-0100">Branched-chain amino acid biosynthesis</keyword>
<keyword id="KW-0408">Iron</keyword>
<keyword id="KW-0411">Iron-sulfur</keyword>
<keyword id="KW-0432">Leucine biosynthesis</keyword>
<keyword id="KW-0456">Lyase</keyword>
<keyword id="KW-0479">Metal-binding</keyword>
<dbReference type="EC" id="4.2.1.33" evidence="1"/>
<dbReference type="EMBL" id="AP010918">
    <property type="protein sequence ID" value="BAH27282.1"/>
    <property type="molecule type" value="Genomic_DNA"/>
</dbReference>
<dbReference type="RefSeq" id="WP_003415114.1">
    <property type="nucleotide sequence ID" value="NZ_CP014566.1"/>
</dbReference>
<dbReference type="SMR" id="C1AGA3"/>
<dbReference type="KEGG" id="mbt:JTY_3004"/>
<dbReference type="HOGENOM" id="CLU_006714_3_4_11"/>
<dbReference type="UniPathway" id="UPA00048">
    <property type="reaction ID" value="UER00071"/>
</dbReference>
<dbReference type="GO" id="GO:0003861">
    <property type="term" value="F:3-isopropylmalate dehydratase activity"/>
    <property type="evidence" value="ECO:0007669"/>
    <property type="project" value="UniProtKB-UniRule"/>
</dbReference>
<dbReference type="GO" id="GO:0051539">
    <property type="term" value="F:4 iron, 4 sulfur cluster binding"/>
    <property type="evidence" value="ECO:0007669"/>
    <property type="project" value="UniProtKB-KW"/>
</dbReference>
<dbReference type="GO" id="GO:0046872">
    <property type="term" value="F:metal ion binding"/>
    <property type="evidence" value="ECO:0007669"/>
    <property type="project" value="UniProtKB-KW"/>
</dbReference>
<dbReference type="GO" id="GO:0009098">
    <property type="term" value="P:L-leucine biosynthetic process"/>
    <property type="evidence" value="ECO:0007669"/>
    <property type="project" value="UniProtKB-UniRule"/>
</dbReference>
<dbReference type="CDD" id="cd01583">
    <property type="entry name" value="IPMI"/>
    <property type="match status" value="1"/>
</dbReference>
<dbReference type="FunFam" id="3.30.499.10:FF:000006">
    <property type="entry name" value="3-isopropylmalate dehydratase large subunit"/>
    <property type="match status" value="1"/>
</dbReference>
<dbReference type="FunFam" id="3.30.499.10:FF:000007">
    <property type="entry name" value="3-isopropylmalate dehydratase large subunit"/>
    <property type="match status" value="1"/>
</dbReference>
<dbReference type="Gene3D" id="3.30.499.10">
    <property type="entry name" value="Aconitase, domain 3"/>
    <property type="match status" value="2"/>
</dbReference>
<dbReference type="HAMAP" id="MF_01026">
    <property type="entry name" value="LeuC_type1"/>
    <property type="match status" value="1"/>
</dbReference>
<dbReference type="InterPro" id="IPR004430">
    <property type="entry name" value="3-IsopropMal_deHydase_lsu"/>
</dbReference>
<dbReference type="InterPro" id="IPR015931">
    <property type="entry name" value="Acnase/IPM_dHydase_lsu_aba_1/3"/>
</dbReference>
<dbReference type="InterPro" id="IPR001030">
    <property type="entry name" value="Acoase/IPM_deHydtase_lsu_aba"/>
</dbReference>
<dbReference type="InterPro" id="IPR018136">
    <property type="entry name" value="Aconitase_4Fe-4S_BS"/>
</dbReference>
<dbReference type="InterPro" id="IPR036008">
    <property type="entry name" value="Aconitase_4Fe-4S_dom"/>
</dbReference>
<dbReference type="InterPro" id="IPR050067">
    <property type="entry name" value="IPM_dehydratase_rel_enz"/>
</dbReference>
<dbReference type="InterPro" id="IPR033941">
    <property type="entry name" value="IPMI_cat"/>
</dbReference>
<dbReference type="NCBIfam" id="TIGR00170">
    <property type="entry name" value="leuC"/>
    <property type="match status" value="1"/>
</dbReference>
<dbReference type="NCBIfam" id="NF004016">
    <property type="entry name" value="PRK05478.1"/>
    <property type="match status" value="1"/>
</dbReference>
<dbReference type="NCBIfam" id="NF009116">
    <property type="entry name" value="PRK12466.1"/>
    <property type="match status" value="1"/>
</dbReference>
<dbReference type="PANTHER" id="PTHR43822:SF9">
    <property type="entry name" value="3-ISOPROPYLMALATE DEHYDRATASE"/>
    <property type="match status" value="1"/>
</dbReference>
<dbReference type="PANTHER" id="PTHR43822">
    <property type="entry name" value="HOMOACONITASE, MITOCHONDRIAL-RELATED"/>
    <property type="match status" value="1"/>
</dbReference>
<dbReference type="Pfam" id="PF00330">
    <property type="entry name" value="Aconitase"/>
    <property type="match status" value="1"/>
</dbReference>
<dbReference type="PRINTS" id="PR00415">
    <property type="entry name" value="ACONITASE"/>
</dbReference>
<dbReference type="SUPFAM" id="SSF53732">
    <property type="entry name" value="Aconitase iron-sulfur domain"/>
    <property type="match status" value="1"/>
</dbReference>
<dbReference type="PROSITE" id="PS00450">
    <property type="entry name" value="ACONITASE_1"/>
    <property type="match status" value="1"/>
</dbReference>
<dbReference type="PROSITE" id="PS01244">
    <property type="entry name" value="ACONITASE_2"/>
    <property type="match status" value="1"/>
</dbReference>
<organism>
    <name type="scientific">Mycobacterium bovis (strain BCG / Tokyo 172 / ATCC 35737 / TMC 1019)</name>
    <dbReference type="NCBI Taxonomy" id="561275"/>
    <lineage>
        <taxon>Bacteria</taxon>
        <taxon>Bacillati</taxon>
        <taxon>Actinomycetota</taxon>
        <taxon>Actinomycetes</taxon>
        <taxon>Mycobacteriales</taxon>
        <taxon>Mycobacteriaceae</taxon>
        <taxon>Mycobacterium</taxon>
        <taxon>Mycobacterium tuberculosis complex</taxon>
    </lineage>
</organism>
<comment type="function">
    <text evidence="1">Catalyzes the isomerization between 2-isopropylmalate and 3-isopropylmalate, via the formation of 2-isopropylmaleate.</text>
</comment>
<comment type="catalytic activity">
    <reaction evidence="1">
        <text>(2R,3S)-3-isopropylmalate = (2S)-2-isopropylmalate</text>
        <dbReference type="Rhea" id="RHEA:32287"/>
        <dbReference type="ChEBI" id="CHEBI:1178"/>
        <dbReference type="ChEBI" id="CHEBI:35121"/>
        <dbReference type="EC" id="4.2.1.33"/>
    </reaction>
</comment>
<comment type="cofactor">
    <cofactor evidence="1">
        <name>[4Fe-4S] cluster</name>
        <dbReference type="ChEBI" id="CHEBI:49883"/>
    </cofactor>
    <text evidence="1">Binds 1 [4Fe-4S] cluster per subunit.</text>
</comment>
<comment type="pathway">
    <text evidence="1">Amino-acid biosynthesis; L-leucine biosynthesis; L-leucine from 3-methyl-2-oxobutanoate: step 2/4.</text>
</comment>
<comment type="subunit">
    <text evidence="1">Heterodimer of LeuC and LeuD.</text>
</comment>
<comment type="similarity">
    <text evidence="1">Belongs to the aconitase/IPM isomerase family. LeuC type 1 subfamily.</text>
</comment>
<protein>
    <recommendedName>
        <fullName evidence="1">3-isopropylmalate dehydratase large subunit</fullName>
        <ecNumber evidence="1">4.2.1.33</ecNumber>
    </recommendedName>
    <alternativeName>
        <fullName evidence="1">Alpha-IPM isomerase</fullName>
        <shortName evidence="1">IPMI</shortName>
    </alternativeName>
    <alternativeName>
        <fullName evidence="1">Isopropylmalate isomerase</fullName>
    </alternativeName>
</protein>
<reference key="1">
    <citation type="journal article" date="2009" name="Vaccine">
        <title>Whole genome sequence analysis of Mycobacterium bovis bacillus Calmette-Guerin (BCG) Tokyo 172: a comparative study of BCG vaccine substrains.</title>
        <authorList>
            <person name="Seki M."/>
            <person name="Honda I."/>
            <person name="Fujita I."/>
            <person name="Yano I."/>
            <person name="Yamamoto S."/>
            <person name="Koyama A."/>
        </authorList>
    </citation>
    <scope>NUCLEOTIDE SEQUENCE [LARGE SCALE GENOMIC DNA]</scope>
    <source>
        <strain>BCG / Tokyo 172 / ATCC 35737 / TMC 1019</strain>
    </source>
</reference>
<feature type="chain" id="PRO_1000149370" description="3-isopropylmalate dehydratase large subunit">
    <location>
        <begin position="1"/>
        <end position="473"/>
    </location>
</feature>
<feature type="binding site" evidence="1">
    <location>
        <position position="354"/>
    </location>
    <ligand>
        <name>[4Fe-4S] cluster</name>
        <dbReference type="ChEBI" id="CHEBI:49883"/>
    </ligand>
</feature>
<feature type="binding site" evidence="1">
    <location>
        <position position="414"/>
    </location>
    <ligand>
        <name>[4Fe-4S] cluster</name>
        <dbReference type="ChEBI" id="CHEBI:49883"/>
    </ligand>
</feature>
<feature type="binding site" evidence="1">
    <location>
        <position position="417"/>
    </location>
    <ligand>
        <name>[4Fe-4S] cluster</name>
        <dbReference type="ChEBI" id="CHEBI:49883"/>
    </ligand>
</feature>
<accession>C1AGA3</accession>
<sequence length="473" mass="50199">MALQTGEPRTLAEKIWDDHIVVSGGGCAPDLIYIDLHLVHEVTSPQAFDGLRLAGRRVRRPELTLATEDHNVPTVDIDQPIADPVSRTQVETLRRNCAEFGIRLHSMGDIEQGIVHVVGPQLGLTQPGMTIVCGDSHTSTHGAFGALAMGIGTSEVEHVLATQTLPLRPFKTMAVNVDGRLPDGVSAKDIILALIAKIGTGGGQGHVIEYRGSAIESLSMEGRMTICNMSIEAGARAGMVAPDETTYAFLRGRPHAPTGAQWDTALVYWQRLRTDVGAVFDTEVYLDAASLSPFVTWGTNPGQGVPLAAAVPDPQLMTDDAERQAAEKALAYMDLRPGTAMREIAVDAVFVGSCTNGRIEDLRVVAEVLRGRKVADGVRMLIVPGSMRVRAQAEAEGLGEIFTDAGAQWRQAGCSMCLGMNPDQLASGERCAATSNRNFEGRQGAGGRTHLVSPAVAAATAVRGTLSSPADLN</sequence>
<gene>
    <name evidence="1" type="primary">leuC</name>
    <name type="ordered locus">JTY_3004</name>
</gene>
<name>LEUC_MYCBT</name>
<proteinExistence type="inferred from homology"/>